<gene>
    <name type="primary">AKR1C4</name>
</gene>
<feature type="chain" id="PRO_0000124641" description="Aldo-keto reductase family 1 member C4">
    <location>
        <begin position="1"/>
        <end position="323"/>
    </location>
</feature>
<feature type="active site" description="Proton donor" evidence="1">
    <location>
        <position position="55"/>
    </location>
</feature>
<feature type="binding site" evidence="3">
    <location>
        <begin position="20"/>
        <end position="24"/>
    </location>
    <ligand>
        <name>NADP(+)</name>
        <dbReference type="ChEBI" id="CHEBI:58349"/>
    </ligand>
</feature>
<feature type="binding site" evidence="3">
    <location>
        <position position="50"/>
    </location>
    <ligand>
        <name>NADP(+)</name>
        <dbReference type="ChEBI" id="CHEBI:58349"/>
    </ligand>
</feature>
<feature type="binding site" evidence="1">
    <location>
        <position position="117"/>
    </location>
    <ligand>
        <name>substrate</name>
    </ligand>
</feature>
<feature type="binding site" evidence="3">
    <location>
        <begin position="166"/>
        <end position="167"/>
    </location>
    <ligand>
        <name>NADP(+)</name>
        <dbReference type="ChEBI" id="CHEBI:58349"/>
    </ligand>
</feature>
<feature type="binding site" evidence="3">
    <location>
        <position position="190"/>
    </location>
    <ligand>
        <name>NADP(+)</name>
        <dbReference type="ChEBI" id="CHEBI:58349"/>
    </ligand>
</feature>
<feature type="binding site" evidence="3">
    <location>
        <begin position="216"/>
        <end position="221"/>
    </location>
    <ligand>
        <name>NADP(+)</name>
        <dbReference type="ChEBI" id="CHEBI:58349"/>
    </ligand>
</feature>
<feature type="binding site" evidence="3">
    <location>
        <begin position="270"/>
        <end position="280"/>
    </location>
    <ligand>
        <name>NADP(+)</name>
        <dbReference type="ChEBI" id="CHEBI:58349"/>
    </ligand>
</feature>
<feature type="site" description="Important for substrate specificity" evidence="2">
    <location>
        <position position="54"/>
    </location>
</feature>
<feature type="site" description="Lowers pKa of active site Tyr" evidence="1">
    <location>
        <position position="84"/>
    </location>
</feature>
<comment type="function">
    <text evidence="3">Cytosolic aldo-keto reductase that catalyzes the NADH and NADPH-dependent reduction of ketosteroids to hydroxysteroids. Liver specific enzyme that acts as an NAD(P)(H)-dependent 3-, 17- and 20-ketosteroid reductase on the steroid nucleus and side chain. Displays the ability to catalyze both oxidation and reduction in vitro, but most probably acts as a reductase in vivo since the oxidase activity measured in vitro is inhibited by physiological concentration of NADPH. Acts preferentially as a 3-alpha-hydroxysteroid dehydrogenase (HSD) with a subsidiary 3-beta-HSD activity. Catalyzes efficiently the transformation of the potent androgen 5-alpha-dihydrotestosterone (5alpha-DHT or 17beta-hydroxy-5alpha-androstan-3-one) into the less active form, 5-alpha-androstan-3-alpha,17-beta-diol (3-alpha-diol). Catalyzes the reduction of estrone into 17beta-estradiol but with low efficiency. Metabolizes a broad spectrum of natural and synthetic therapeutic steroid and plays an important role in metabolism of androgens, estrogens, progestereone and conjugated steroids. Catalyzes the biotransformation of the pesticide chlordecone (kepone) to its corresponding alcohol leading to increased biliary excretion of the pesticide and concomitant reduction of its neurotoxicity since bile is the major excretory route.</text>
</comment>
<comment type="catalytic activity">
    <reaction evidence="3">
        <text>chlordecone alcohol + NADP(+) = chlordecone + NADPH + H(+)</text>
        <dbReference type="Rhea" id="RHEA:14401"/>
        <dbReference type="ChEBI" id="CHEBI:15378"/>
        <dbReference type="ChEBI" id="CHEBI:16548"/>
        <dbReference type="ChEBI" id="CHEBI:17184"/>
        <dbReference type="ChEBI" id="CHEBI:57783"/>
        <dbReference type="ChEBI" id="CHEBI:58349"/>
        <dbReference type="EC" id="1.1.1.225"/>
    </reaction>
</comment>
<comment type="catalytic activity">
    <reaction evidence="3">
        <text>a 3alpha-hydroxysteroid + NADP(+) = a 3-oxosteroid + NADPH + H(+)</text>
        <dbReference type="Rhea" id="RHEA:34783"/>
        <dbReference type="ChEBI" id="CHEBI:15378"/>
        <dbReference type="ChEBI" id="CHEBI:36835"/>
        <dbReference type="ChEBI" id="CHEBI:47788"/>
        <dbReference type="ChEBI" id="CHEBI:57783"/>
        <dbReference type="ChEBI" id="CHEBI:58349"/>
        <dbReference type="EC" id="1.1.1.357"/>
    </reaction>
</comment>
<comment type="catalytic activity">
    <reaction evidence="3">
        <text>a 3alpha-hydroxysteroid + NAD(+) = a 3-oxosteroid + NADH + H(+)</text>
        <dbReference type="Rhea" id="RHEA:34779"/>
        <dbReference type="ChEBI" id="CHEBI:15378"/>
        <dbReference type="ChEBI" id="CHEBI:36835"/>
        <dbReference type="ChEBI" id="CHEBI:47788"/>
        <dbReference type="ChEBI" id="CHEBI:57540"/>
        <dbReference type="ChEBI" id="CHEBI:57945"/>
        <dbReference type="EC" id="1.1.1.357"/>
    </reaction>
</comment>
<comment type="catalytic activity">
    <reaction evidence="3">
        <text>5alpha-androstane-3alpha,17beta-diol + NADP(+) = 17beta-hydroxy-5alpha-androstan-3-one + NADPH + H(+)</text>
        <dbReference type="Rhea" id="RHEA:42116"/>
        <dbReference type="ChEBI" id="CHEBI:15378"/>
        <dbReference type="ChEBI" id="CHEBI:16330"/>
        <dbReference type="ChEBI" id="CHEBI:36713"/>
        <dbReference type="ChEBI" id="CHEBI:57783"/>
        <dbReference type="ChEBI" id="CHEBI:58349"/>
    </reaction>
    <physiologicalReaction direction="right-to-left" evidence="3">
        <dbReference type="Rhea" id="RHEA:42118"/>
    </physiologicalReaction>
</comment>
<comment type="catalytic activity">
    <reaction evidence="3">
        <text>5alpha-androstane-3beta,17beta-diol + NADP(+) = 17beta-hydroxy-5alpha-androstan-3-one + NADPH + H(+)</text>
        <dbReference type="Rhea" id="RHEA:16297"/>
        <dbReference type="ChEBI" id="CHEBI:15378"/>
        <dbReference type="ChEBI" id="CHEBI:16330"/>
        <dbReference type="ChEBI" id="CHEBI:18329"/>
        <dbReference type="ChEBI" id="CHEBI:57783"/>
        <dbReference type="ChEBI" id="CHEBI:58349"/>
        <dbReference type="EC" id="1.1.1.210"/>
    </reaction>
    <physiologicalReaction direction="right-to-left" evidence="3">
        <dbReference type="Rhea" id="RHEA:16299"/>
    </physiologicalReaction>
</comment>
<comment type="catalytic activity">
    <reaction evidence="3">
        <text>5alpha-androstane-3alpha,17beta-diol + NAD(+) = 17beta-hydroxy-5alpha-androstan-3-one + NADH + H(+)</text>
        <dbReference type="Rhea" id="RHEA:42004"/>
        <dbReference type="ChEBI" id="CHEBI:15378"/>
        <dbReference type="ChEBI" id="CHEBI:16330"/>
        <dbReference type="ChEBI" id="CHEBI:36713"/>
        <dbReference type="ChEBI" id="CHEBI:57540"/>
        <dbReference type="ChEBI" id="CHEBI:57945"/>
        <dbReference type="EC" id="1.1.1.53"/>
    </reaction>
    <physiologicalReaction direction="left-to-right" evidence="3">
        <dbReference type="Rhea" id="RHEA:42005"/>
    </physiologicalReaction>
    <physiologicalReaction direction="right-to-left" evidence="3">
        <dbReference type="Rhea" id="RHEA:42006"/>
    </physiologicalReaction>
</comment>
<comment type="catalytic activity">
    <reaction evidence="3">
        <text>17beta-estradiol + NADP(+) = estrone + NADPH + H(+)</text>
        <dbReference type="Rhea" id="RHEA:24616"/>
        <dbReference type="ChEBI" id="CHEBI:15378"/>
        <dbReference type="ChEBI" id="CHEBI:16469"/>
        <dbReference type="ChEBI" id="CHEBI:17263"/>
        <dbReference type="ChEBI" id="CHEBI:57783"/>
        <dbReference type="ChEBI" id="CHEBI:58349"/>
        <dbReference type="EC" id="1.1.1.62"/>
    </reaction>
    <physiologicalReaction direction="left-to-right" evidence="3">
        <dbReference type="Rhea" id="RHEA:24617"/>
    </physiologicalReaction>
    <physiologicalReaction direction="right-to-left" evidence="3">
        <dbReference type="Rhea" id="RHEA:24618"/>
    </physiologicalReaction>
</comment>
<comment type="catalytic activity">
    <reaction evidence="3">
        <text>17beta-estradiol + NAD(+) = estrone + NADH + H(+)</text>
        <dbReference type="Rhea" id="RHEA:24612"/>
        <dbReference type="ChEBI" id="CHEBI:15378"/>
        <dbReference type="ChEBI" id="CHEBI:16469"/>
        <dbReference type="ChEBI" id="CHEBI:17263"/>
        <dbReference type="ChEBI" id="CHEBI:57540"/>
        <dbReference type="ChEBI" id="CHEBI:57945"/>
        <dbReference type="EC" id="1.1.1.62"/>
    </reaction>
    <physiologicalReaction direction="left-to-right" evidence="3">
        <dbReference type="Rhea" id="RHEA:24613"/>
    </physiologicalReaction>
    <physiologicalReaction direction="right-to-left" evidence="3">
        <dbReference type="Rhea" id="RHEA:24614"/>
    </physiologicalReaction>
</comment>
<comment type="catalytic activity">
    <reaction evidence="3">
        <text>(20S)-hydroxypregn-4-en-3-one + NADP(+) = progesterone + NADPH + H(+)</text>
        <dbReference type="Rhea" id="RHEA:42112"/>
        <dbReference type="ChEBI" id="CHEBI:15378"/>
        <dbReference type="ChEBI" id="CHEBI:17026"/>
        <dbReference type="ChEBI" id="CHEBI:28453"/>
        <dbReference type="ChEBI" id="CHEBI:57783"/>
        <dbReference type="ChEBI" id="CHEBI:58349"/>
    </reaction>
    <physiologicalReaction direction="left-to-right" evidence="3">
        <dbReference type="Rhea" id="RHEA:42113"/>
    </physiologicalReaction>
    <physiologicalReaction direction="right-to-left" evidence="3">
        <dbReference type="Rhea" id="RHEA:42114"/>
    </physiologicalReaction>
</comment>
<comment type="catalytic activity">
    <reaction evidence="3">
        <text>(20S)-hydroxypregn-4-en-3-one + NAD(+) = progesterone + NADH + H(+)</text>
        <dbReference type="Rhea" id="RHEA:42108"/>
        <dbReference type="ChEBI" id="CHEBI:15378"/>
        <dbReference type="ChEBI" id="CHEBI:17026"/>
        <dbReference type="ChEBI" id="CHEBI:28453"/>
        <dbReference type="ChEBI" id="CHEBI:57540"/>
        <dbReference type="ChEBI" id="CHEBI:57945"/>
    </reaction>
    <physiologicalReaction direction="left-to-right" evidence="3">
        <dbReference type="Rhea" id="RHEA:42109"/>
    </physiologicalReaction>
    <physiologicalReaction direction="right-to-left" evidence="3">
        <dbReference type="Rhea" id="RHEA:42110"/>
    </physiologicalReaction>
</comment>
<comment type="catalytic activity">
    <reaction evidence="3">
        <text>androsterone + NADP(+) = 5alpha-androstan-3,17-dione + NADPH + H(+)</text>
        <dbReference type="Rhea" id="RHEA:20377"/>
        <dbReference type="ChEBI" id="CHEBI:15378"/>
        <dbReference type="ChEBI" id="CHEBI:15994"/>
        <dbReference type="ChEBI" id="CHEBI:16032"/>
        <dbReference type="ChEBI" id="CHEBI:57783"/>
        <dbReference type="ChEBI" id="CHEBI:58349"/>
        <dbReference type="EC" id="1.1.1.209"/>
    </reaction>
    <physiologicalReaction direction="left-to-right" evidence="3">
        <dbReference type="Rhea" id="RHEA:20378"/>
    </physiologicalReaction>
</comment>
<comment type="catalytic activity">
    <reaction evidence="3">
        <text>testosterone + NADP(+) = androst-4-ene-3,17-dione + NADPH + H(+)</text>
        <dbReference type="Rhea" id="RHEA:14981"/>
        <dbReference type="ChEBI" id="CHEBI:15378"/>
        <dbReference type="ChEBI" id="CHEBI:16422"/>
        <dbReference type="ChEBI" id="CHEBI:17347"/>
        <dbReference type="ChEBI" id="CHEBI:57783"/>
        <dbReference type="ChEBI" id="CHEBI:58349"/>
        <dbReference type="EC" id="1.1.1.51"/>
    </reaction>
    <physiologicalReaction direction="left-to-right" evidence="3">
        <dbReference type="Rhea" id="RHEA:14982"/>
    </physiologicalReaction>
</comment>
<comment type="catalytic activity">
    <reaction evidence="3">
        <text>testosterone + NAD(+) = androst-4-ene-3,17-dione + NADH + H(+)</text>
        <dbReference type="Rhea" id="RHEA:14929"/>
        <dbReference type="ChEBI" id="CHEBI:15378"/>
        <dbReference type="ChEBI" id="CHEBI:16422"/>
        <dbReference type="ChEBI" id="CHEBI:17347"/>
        <dbReference type="ChEBI" id="CHEBI:57540"/>
        <dbReference type="ChEBI" id="CHEBI:57945"/>
        <dbReference type="EC" id="1.1.1.51"/>
    </reaction>
    <physiologicalReaction direction="left-to-right" evidence="3">
        <dbReference type="Rhea" id="RHEA:14930"/>
    </physiologicalReaction>
</comment>
<comment type="catalytic activity">
    <reaction evidence="3">
        <text>3alpha-hydroxy-5alpha-androstane 17-O-(beta-D-glucuronate) + NADP(+) = 5alpha-dihydrotestosterone 17-O-(beta-D-glucuronate) + NADPH + H(+)</text>
        <dbReference type="Rhea" id="RHEA:53112"/>
        <dbReference type="ChEBI" id="CHEBI:15378"/>
        <dbReference type="ChEBI" id="CHEBI:57783"/>
        <dbReference type="ChEBI" id="CHEBI:58349"/>
        <dbReference type="ChEBI" id="CHEBI:133519"/>
        <dbReference type="ChEBI" id="CHEBI:136914"/>
    </reaction>
    <physiologicalReaction direction="right-to-left" evidence="3">
        <dbReference type="Rhea" id="RHEA:53114"/>
    </physiologicalReaction>
</comment>
<comment type="catalytic activity">
    <reaction evidence="3">
        <text>(3beta,5alpha,17beta)-3-hydroxy-androstan-17-yl sulfate + NADP(+) = 5alpha-dihydrotestosterone sulfate + NADPH + H(+)</text>
        <dbReference type="Rhea" id="RHEA:53136"/>
        <dbReference type="ChEBI" id="CHEBI:15378"/>
        <dbReference type="ChEBI" id="CHEBI:57783"/>
        <dbReference type="ChEBI" id="CHEBI:58349"/>
        <dbReference type="ChEBI" id="CHEBI:133105"/>
        <dbReference type="ChEBI" id="CHEBI:136982"/>
    </reaction>
    <physiologicalReaction direction="right-to-left" evidence="3">
        <dbReference type="Rhea" id="RHEA:53138"/>
    </physiologicalReaction>
</comment>
<comment type="catalytic activity">
    <reaction evidence="3">
        <text>5alpha-androstane-3alpha,17beta-diol + NAD(+) = androsterone + NADH + H(+)</text>
        <dbReference type="Rhea" id="RHEA:42124"/>
        <dbReference type="ChEBI" id="CHEBI:15378"/>
        <dbReference type="ChEBI" id="CHEBI:16032"/>
        <dbReference type="ChEBI" id="CHEBI:36713"/>
        <dbReference type="ChEBI" id="CHEBI:57540"/>
        <dbReference type="ChEBI" id="CHEBI:57945"/>
    </reaction>
    <physiologicalReaction direction="left-to-right" evidence="3">
        <dbReference type="Rhea" id="RHEA:42125"/>
    </physiologicalReaction>
</comment>
<comment type="pathway">
    <text evidence="3">Steroid metabolism.</text>
</comment>
<comment type="subunit">
    <text evidence="3">Monomer.</text>
</comment>
<comment type="subcellular location">
    <subcellularLocation>
        <location evidence="4">Cytoplasm</location>
        <location evidence="4">Cytosol</location>
    </subcellularLocation>
</comment>
<comment type="similarity">
    <text evidence="6">Belongs to the aldo/keto reductase family.</text>
</comment>
<evidence type="ECO:0000250" key="1"/>
<evidence type="ECO:0000250" key="2">
    <source>
        <dbReference type="UniProtKB" id="P14550"/>
    </source>
</evidence>
<evidence type="ECO:0000250" key="3">
    <source>
        <dbReference type="UniProtKB" id="P17516"/>
    </source>
</evidence>
<evidence type="ECO:0000250" key="4">
    <source>
        <dbReference type="UniProtKB" id="Q04828"/>
    </source>
</evidence>
<evidence type="ECO:0000303" key="5">
    <source>
    </source>
</evidence>
<evidence type="ECO:0000305" key="6"/>
<proteinExistence type="evidence at protein level"/>
<dbReference type="EC" id="1.1.1.-" evidence="3"/>
<dbReference type="EC" id="1.1.1.209" evidence="3"/>
<dbReference type="EC" id="1.1.1.210" evidence="3"/>
<dbReference type="EC" id="1.1.1.51" evidence="3"/>
<dbReference type="EC" id="1.1.1.53" evidence="3"/>
<dbReference type="EC" id="1.1.1.62" evidence="3"/>
<dbReference type="EC" id="1.1.1.357" evidence="3"/>
<dbReference type="EC" id="1.1.1.225" evidence="3"/>
<dbReference type="EMBL" id="AB070211">
    <property type="protein sequence ID" value="BAB63208.1"/>
    <property type="molecule type" value="mRNA"/>
</dbReference>
<dbReference type="RefSeq" id="NP_001270628.1">
    <property type="nucleotide sequence ID" value="NM_001283699.1"/>
</dbReference>
<dbReference type="SMR" id="Q95JH5"/>
<dbReference type="BRENDA" id="1.3.1.20">
    <property type="organism ID" value="1793"/>
</dbReference>
<dbReference type="Proteomes" id="UP000233100">
    <property type="component" value="Unplaced"/>
</dbReference>
<dbReference type="GO" id="GO:0005829">
    <property type="term" value="C:cytosol"/>
    <property type="evidence" value="ECO:0007669"/>
    <property type="project" value="UniProtKB-SubCell"/>
</dbReference>
<dbReference type="GO" id="GO:0047024">
    <property type="term" value="F:5-alpha-androstane-3-beta,17-beta-diol dehydrogenase (NADP+) activity"/>
    <property type="evidence" value="ECO:0007669"/>
    <property type="project" value="UniProtKB-EC"/>
</dbReference>
<dbReference type="GO" id="GO:0047044">
    <property type="term" value="F:androstan-3-alpha,17-beta-diol dehydrogenase (NAD+) activity"/>
    <property type="evidence" value="ECO:0007669"/>
    <property type="project" value="UniProtKB-EC"/>
</dbReference>
<dbReference type="GO" id="GO:0047023">
    <property type="term" value="F:androsterone dehydrogenase [NAD(P)+] activity"/>
    <property type="evidence" value="ECO:0007669"/>
    <property type="project" value="UniProtKB-EC"/>
</dbReference>
<dbReference type="GO" id="GO:0047743">
    <property type="term" value="F:chlordecone reductase activity"/>
    <property type="evidence" value="ECO:0007669"/>
    <property type="project" value="UniProtKB-EC"/>
</dbReference>
<dbReference type="GO" id="GO:0004303">
    <property type="term" value="F:estradiol 17-beta-dehydrogenase [NAD(P)+] activity"/>
    <property type="evidence" value="ECO:0007669"/>
    <property type="project" value="UniProtKB-EC"/>
</dbReference>
<dbReference type="GO" id="GO:0047045">
    <property type="term" value="F:testosterone 17-beta-dehydrogenase (NADP+) activity"/>
    <property type="evidence" value="ECO:0007669"/>
    <property type="project" value="RHEA"/>
</dbReference>
<dbReference type="GO" id="GO:0047035">
    <property type="term" value="F:testosterone dehydrogenase (NAD+) activity"/>
    <property type="evidence" value="ECO:0007669"/>
    <property type="project" value="RHEA"/>
</dbReference>
<dbReference type="GO" id="GO:0006629">
    <property type="term" value="P:lipid metabolic process"/>
    <property type="evidence" value="ECO:0007669"/>
    <property type="project" value="UniProtKB-KW"/>
</dbReference>
<dbReference type="CDD" id="cd19108">
    <property type="entry name" value="AKR_AKR1C1-35"/>
    <property type="match status" value="1"/>
</dbReference>
<dbReference type="FunFam" id="3.20.20.100:FF:000003">
    <property type="entry name" value="Aldo-keto reductase family 1 member C3"/>
    <property type="match status" value="1"/>
</dbReference>
<dbReference type="Gene3D" id="3.20.20.100">
    <property type="entry name" value="NADP-dependent oxidoreductase domain"/>
    <property type="match status" value="1"/>
</dbReference>
<dbReference type="InterPro" id="IPR020471">
    <property type="entry name" value="AKR"/>
</dbReference>
<dbReference type="InterPro" id="IPR044482">
    <property type="entry name" value="AKR1C"/>
</dbReference>
<dbReference type="InterPro" id="IPR018170">
    <property type="entry name" value="Aldo/ket_reductase_CS"/>
</dbReference>
<dbReference type="InterPro" id="IPR023210">
    <property type="entry name" value="NADP_OxRdtase_dom"/>
</dbReference>
<dbReference type="InterPro" id="IPR036812">
    <property type="entry name" value="NADP_OxRdtase_dom_sf"/>
</dbReference>
<dbReference type="PANTHER" id="PTHR11732">
    <property type="entry name" value="ALDO/KETO REDUCTASE"/>
    <property type="match status" value="1"/>
</dbReference>
<dbReference type="Pfam" id="PF00248">
    <property type="entry name" value="Aldo_ket_red"/>
    <property type="match status" value="1"/>
</dbReference>
<dbReference type="PIRSF" id="PIRSF000097">
    <property type="entry name" value="AKR"/>
    <property type="match status" value="1"/>
</dbReference>
<dbReference type="PRINTS" id="PR00069">
    <property type="entry name" value="ALDKETRDTASE"/>
</dbReference>
<dbReference type="SUPFAM" id="SSF51430">
    <property type="entry name" value="NAD(P)-linked oxidoreductase"/>
    <property type="match status" value="1"/>
</dbReference>
<dbReference type="PROSITE" id="PS00798">
    <property type="entry name" value="ALDOKETO_REDUCTASE_1"/>
    <property type="match status" value="1"/>
</dbReference>
<dbReference type="PROSITE" id="PS00062">
    <property type="entry name" value="ALDOKETO_REDUCTASE_2"/>
    <property type="match status" value="1"/>
</dbReference>
<dbReference type="PROSITE" id="PS00063">
    <property type="entry name" value="ALDOKETO_REDUCTASE_3"/>
    <property type="match status" value="1"/>
</dbReference>
<reference key="1">
    <citation type="journal article" date="2002" name="Drug Metab. Pharmacokinet.">
        <title>Molecular characterization of two monkey dihydrodiol dehydrogenases.</title>
        <authorList>
            <person name="Higaki Y."/>
            <person name="Kamiya T."/>
            <person name="Usami N."/>
            <person name="Shintani S."/>
            <person name="Shiraishi H."/>
            <person name="Ishikura S."/>
            <person name="Yamamoto I."/>
            <person name="Hara A."/>
        </authorList>
    </citation>
    <scope>NUCLEOTIDE SEQUENCE [MRNA]</scope>
    <scope>PROTEIN SEQUENCE OF 2-23; 69-116; 137-153; 184-246 AND 250-323</scope>
    <source>
        <tissue>Liver</tissue>
    </source>
</reference>
<name>AK1C4_MACFA</name>
<organism>
    <name type="scientific">Macaca fascicularis</name>
    <name type="common">Crab-eating macaque</name>
    <name type="synonym">Cynomolgus monkey</name>
    <dbReference type="NCBI Taxonomy" id="9541"/>
    <lineage>
        <taxon>Eukaryota</taxon>
        <taxon>Metazoa</taxon>
        <taxon>Chordata</taxon>
        <taxon>Craniata</taxon>
        <taxon>Vertebrata</taxon>
        <taxon>Euteleostomi</taxon>
        <taxon>Mammalia</taxon>
        <taxon>Eutheria</taxon>
        <taxon>Euarchontoglires</taxon>
        <taxon>Primates</taxon>
        <taxon>Haplorrhini</taxon>
        <taxon>Catarrhini</taxon>
        <taxon>Cercopithecidae</taxon>
        <taxon>Cercopithecinae</taxon>
        <taxon>Macaca</taxon>
    </lineage>
</organism>
<sequence length="323" mass="37117">MDPKYQRVALNDGHFMPVLGFGTYAPPEVPRNRVVEVTKLAIEAGFRHIDSAYLYNNEEQVGLAIRSKIADGSVKREDIFYTSKLWCTFFRPQLVQPALESSLKKLQLDYVDLYLIHFPMALKPGETPLPKDENGKVMFDTVDLCAIWEAMEKCKDAGLAKSIGVSNFNRRQLEMILNNPGLKYKPVCNQVECHPYLNQSKLLDFCKSKDIVLVAHSALGTQRHKLWVDQNSPALLEDPVLCALAKKHKRSPALIALRYQLQRGVVVLAKSYNEQRIRENVQVFEFQLTSEDMKVLDDLNRNFRYVVMDFLVDHPDYPFSDEY</sequence>
<accession>Q95JH5</accession>
<keyword id="KW-0963">Cytoplasm</keyword>
<keyword id="KW-0903">Direct protein sequencing</keyword>
<keyword id="KW-0443">Lipid metabolism</keyword>
<keyword id="KW-0521">NADP</keyword>
<keyword id="KW-0560">Oxidoreductase</keyword>
<keyword id="KW-1185">Reference proteome</keyword>
<protein>
    <recommendedName>
        <fullName>Aldo-keto reductase family 1 member C4</fullName>
        <ecNumber evidence="3">1.1.1.-</ecNumber>
        <ecNumber evidence="3">1.1.1.209</ecNumber>
        <ecNumber evidence="3">1.1.1.210</ecNumber>
        <ecNumber evidence="3">1.1.1.51</ecNumber>
        <ecNumber evidence="3">1.1.1.53</ecNumber>
        <ecNumber evidence="3">1.1.1.62</ecNumber>
    </recommendedName>
    <alternativeName>
        <fullName>3-alpha-hydroxysteroid dehydrogenase type I</fullName>
        <shortName>3-alpha-HSD1</shortName>
        <ecNumber evidence="3">1.1.1.357</ecNumber>
    </alternativeName>
    <alternativeName>
        <fullName>3alpha-hydroxysteroid 3-dehydrogenase</fullName>
    </alternativeName>
    <alternativeName>
        <fullName>Chlordecone reductase homolog</fullName>
        <shortName>CDR</shortName>
        <ecNumber evidence="3">1.1.1.225</ecNumber>
    </alternativeName>
    <alternativeName>
        <fullName evidence="5">Dihydrodiol dehydrogenase 4</fullName>
        <shortName>DD-4</shortName>
        <shortName evidence="5">DD4</shortName>
    </alternativeName>
</protein>